<gene>
    <name evidence="1" type="primary">mug</name>
    <name type="ordered locus">KPK_0643</name>
</gene>
<feature type="chain" id="PRO_1000188961" description="G/U mismatch-specific DNA glycosylase">
    <location>
        <begin position="1"/>
        <end position="168"/>
    </location>
</feature>
<proteinExistence type="inferred from homology"/>
<organism>
    <name type="scientific">Klebsiella pneumoniae (strain 342)</name>
    <dbReference type="NCBI Taxonomy" id="507522"/>
    <lineage>
        <taxon>Bacteria</taxon>
        <taxon>Pseudomonadati</taxon>
        <taxon>Pseudomonadota</taxon>
        <taxon>Gammaproteobacteria</taxon>
        <taxon>Enterobacterales</taxon>
        <taxon>Enterobacteriaceae</taxon>
        <taxon>Klebsiella/Raoultella group</taxon>
        <taxon>Klebsiella</taxon>
        <taxon>Klebsiella pneumoniae complex</taxon>
    </lineage>
</organism>
<comment type="function">
    <text evidence="1">Excises ethenocytosine and uracil, which can arise by alkylation or deamination of cytosine, respectively, from the corresponding mispairs with guanine in ds-DNA. It is capable of hydrolyzing the carbon-nitrogen bond between the sugar-phosphate backbone of the DNA and the mispaired base. The complementary strand guanine functions in substrate recognition. Required for DNA damage lesion repair in stationary-phase cells.</text>
</comment>
<comment type="catalytic activity">
    <reaction evidence="1">
        <text>Specifically hydrolyzes mismatched double-stranded DNA and polynucleotides, releasing free uracil.</text>
        <dbReference type="EC" id="3.2.2.28"/>
    </reaction>
</comment>
<comment type="subunit">
    <text evidence="1">Binds DNA as a monomer.</text>
</comment>
<comment type="subcellular location">
    <subcellularLocation>
        <location evidence="1">Cytoplasm</location>
    </subcellularLocation>
</comment>
<comment type="similarity">
    <text evidence="1">Belongs to the uracil-DNA glycosylase (UDG) superfamily. TDG/mug family.</text>
</comment>
<keyword id="KW-0963">Cytoplasm</keyword>
<keyword id="KW-0227">DNA damage</keyword>
<keyword id="KW-0228">DNA excision</keyword>
<keyword id="KW-0234">DNA repair</keyword>
<keyword id="KW-0238">DNA-binding</keyword>
<keyword id="KW-0378">Hydrolase</keyword>
<reference key="1">
    <citation type="journal article" date="2008" name="PLoS Genet.">
        <title>Complete genome sequence of the N2-fixing broad host range endophyte Klebsiella pneumoniae 342 and virulence predictions verified in mice.</title>
        <authorList>
            <person name="Fouts D.E."/>
            <person name="Tyler H.L."/>
            <person name="DeBoy R.T."/>
            <person name="Daugherty S."/>
            <person name="Ren Q."/>
            <person name="Badger J.H."/>
            <person name="Durkin A.S."/>
            <person name="Huot H."/>
            <person name="Shrivastava S."/>
            <person name="Kothari S."/>
            <person name="Dodson R.J."/>
            <person name="Mohamoud Y."/>
            <person name="Khouri H."/>
            <person name="Roesch L.F.W."/>
            <person name="Krogfelt K.A."/>
            <person name="Struve C."/>
            <person name="Triplett E.W."/>
            <person name="Methe B.A."/>
        </authorList>
    </citation>
    <scope>NUCLEOTIDE SEQUENCE [LARGE SCALE GENOMIC DNA]</scope>
    <source>
        <strain>342</strain>
    </source>
</reference>
<accession>B5XU18</accession>
<protein>
    <recommendedName>
        <fullName evidence="1">G/U mismatch-specific DNA glycosylase</fullName>
        <ecNumber evidence="1">3.2.2.28</ecNumber>
    </recommendedName>
    <alternativeName>
        <fullName evidence="1">Double-strand-specific uracil glycosylase</fullName>
    </alternativeName>
    <alternativeName>
        <fullName evidence="1">Mismatch-specific uracil DNA-glycosylase</fullName>
        <shortName evidence="1">MUG</shortName>
    </alternativeName>
</protein>
<name>MUG_KLEP3</name>
<sequence>MISDILAPGLRVVFCGINPGKSSAHTGFHFAHPGNRFWKVIHQAGFTDRQLRPEEELQLLDTRCGITMLVERPTVQASEVALQELRSGGRELVRKIEEYQPQALAVLGKQAFELAFNQRGAKWGKQAITIGTTQVWVLPNPSGLNRATLDKLVAAYRELDDALATRGQ</sequence>
<evidence type="ECO:0000255" key="1">
    <source>
        <dbReference type="HAMAP-Rule" id="MF_01956"/>
    </source>
</evidence>
<dbReference type="EC" id="3.2.2.28" evidence="1"/>
<dbReference type="EMBL" id="CP000964">
    <property type="protein sequence ID" value="ACI06905.1"/>
    <property type="molecule type" value="Genomic_DNA"/>
</dbReference>
<dbReference type="SMR" id="B5XU18"/>
<dbReference type="KEGG" id="kpe:KPK_0643"/>
<dbReference type="HOGENOM" id="CLU_042829_3_1_6"/>
<dbReference type="Proteomes" id="UP000001734">
    <property type="component" value="Chromosome"/>
</dbReference>
<dbReference type="GO" id="GO:0005737">
    <property type="term" value="C:cytoplasm"/>
    <property type="evidence" value="ECO:0007669"/>
    <property type="project" value="UniProtKB-SubCell"/>
</dbReference>
<dbReference type="GO" id="GO:0003677">
    <property type="term" value="F:DNA binding"/>
    <property type="evidence" value="ECO:0007669"/>
    <property type="project" value="UniProtKB-KW"/>
</dbReference>
<dbReference type="GO" id="GO:0008263">
    <property type="term" value="F:pyrimidine-specific mismatch base pair DNA N-glycosylase activity"/>
    <property type="evidence" value="ECO:0007669"/>
    <property type="project" value="UniProtKB-UniRule"/>
</dbReference>
<dbReference type="GO" id="GO:0004844">
    <property type="term" value="F:uracil DNA N-glycosylase activity"/>
    <property type="evidence" value="ECO:0007669"/>
    <property type="project" value="TreeGrafter"/>
</dbReference>
<dbReference type="GO" id="GO:0006285">
    <property type="term" value="P:base-excision repair, AP site formation"/>
    <property type="evidence" value="ECO:0007669"/>
    <property type="project" value="UniProtKB-UniRule"/>
</dbReference>
<dbReference type="CDD" id="cd10028">
    <property type="entry name" value="UDG-F2_TDG_MUG"/>
    <property type="match status" value="1"/>
</dbReference>
<dbReference type="Gene3D" id="3.40.470.10">
    <property type="entry name" value="Uracil-DNA glycosylase-like domain"/>
    <property type="match status" value="1"/>
</dbReference>
<dbReference type="HAMAP" id="MF_01956">
    <property type="entry name" value="MUG"/>
    <property type="match status" value="1"/>
</dbReference>
<dbReference type="InterPro" id="IPR015637">
    <property type="entry name" value="MUG/TDG"/>
</dbReference>
<dbReference type="InterPro" id="IPR023502">
    <property type="entry name" value="MUG_bact"/>
</dbReference>
<dbReference type="InterPro" id="IPR005122">
    <property type="entry name" value="Uracil-DNA_glycosylase-like"/>
</dbReference>
<dbReference type="InterPro" id="IPR036895">
    <property type="entry name" value="Uracil-DNA_glycosylase-like_sf"/>
</dbReference>
<dbReference type="NCBIfam" id="NF007570">
    <property type="entry name" value="PRK10201.1"/>
    <property type="match status" value="1"/>
</dbReference>
<dbReference type="PANTHER" id="PTHR12159">
    <property type="entry name" value="G/T AND G/U MISMATCH-SPECIFIC DNA GLYCOSYLASE"/>
    <property type="match status" value="1"/>
</dbReference>
<dbReference type="PANTHER" id="PTHR12159:SF9">
    <property type="entry name" value="G_T MISMATCH-SPECIFIC THYMINE DNA GLYCOSYLASE"/>
    <property type="match status" value="1"/>
</dbReference>
<dbReference type="Pfam" id="PF03167">
    <property type="entry name" value="UDG"/>
    <property type="match status" value="1"/>
</dbReference>
<dbReference type="SMART" id="SM00986">
    <property type="entry name" value="UDG"/>
    <property type="match status" value="1"/>
</dbReference>
<dbReference type="SMART" id="SM00987">
    <property type="entry name" value="UreE_C"/>
    <property type="match status" value="1"/>
</dbReference>
<dbReference type="SUPFAM" id="SSF52141">
    <property type="entry name" value="Uracil-DNA glycosylase-like"/>
    <property type="match status" value="1"/>
</dbReference>